<organism>
    <name type="scientific">Brucella abortus (strain 2308)</name>
    <dbReference type="NCBI Taxonomy" id="359391"/>
    <lineage>
        <taxon>Bacteria</taxon>
        <taxon>Pseudomonadati</taxon>
        <taxon>Pseudomonadota</taxon>
        <taxon>Alphaproteobacteria</taxon>
        <taxon>Hyphomicrobiales</taxon>
        <taxon>Brucellaceae</taxon>
        <taxon>Brucella/Ochrobactrum group</taxon>
        <taxon>Brucella</taxon>
    </lineage>
</organism>
<protein>
    <recommendedName>
        <fullName evidence="6">Sensor kinase CckA</fullName>
    </recommendedName>
    <domain>
        <recommendedName>
            <fullName evidence="6">Protein histidine kinase</fullName>
            <ecNumber evidence="5">2.7.13.3</ecNumber>
        </recommendedName>
    </domain>
    <domain>
        <recommendedName>
            <fullName evidence="7">Response regulator</fullName>
        </recommendedName>
    </domain>
</protein>
<feature type="chain" id="PRO_0000436621" description="Sensor kinase CckA">
    <location>
        <begin position="1"/>
        <end position="945"/>
    </location>
</feature>
<feature type="transmembrane region" description="Helical" evidence="1">
    <location>
        <begin position="111"/>
        <end position="131"/>
    </location>
</feature>
<feature type="transmembrane region" description="Helical" evidence="1">
    <location>
        <begin position="139"/>
        <end position="159"/>
    </location>
</feature>
<feature type="domain" description="PAS 1" evidence="3">
    <location>
        <begin position="171"/>
        <end position="212"/>
    </location>
</feature>
<feature type="domain" description="PAS 2" evidence="3">
    <location>
        <begin position="313"/>
        <end position="341"/>
    </location>
</feature>
<feature type="domain" description="PAS 3" evidence="3">
    <location>
        <begin position="432"/>
        <end position="505"/>
    </location>
</feature>
<feature type="domain" description="Histidine kinase" evidence="2">
    <location>
        <begin position="574"/>
        <end position="797"/>
    </location>
</feature>
<feature type="domain" description="Response regulatory" evidence="4">
    <location>
        <begin position="825"/>
        <end position="941"/>
    </location>
</feature>
<feature type="modified residue" description="Phosphohistidine; by autocatalysis" evidence="2">
    <location>
        <position position="577"/>
    </location>
</feature>
<feature type="modified residue" description="4-aspartylphosphate" evidence="4">
    <location>
        <position position="876"/>
    </location>
</feature>
<reference key="1">
    <citation type="journal article" date="2005" name="Infect. Immun.">
        <title>Whole-genome analyses of speciation events in pathogenic Brucellae.</title>
        <authorList>
            <person name="Chain P.S."/>
            <person name="Comerci D.J."/>
            <person name="Tolmasky M.E."/>
            <person name="Larimer F.W."/>
            <person name="Malfatti S.A."/>
            <person name="Vergez L.M."/>
            <person name="Aguero F."/>
            <person name="Land M.L."/>
            <person name="Ugalde R.A."/>
            <person name="Garcia E."/>
        </authorList>
    </citation>
    <scope>NUCLEOTIDE SEQUENCE [LARGE SCALE GENOMIC DNA]</scope>
    <source>
        <strain>2308</strain>
    </source>
</reference>
<reference key="2">
    <citation type="journal article" date="2015" name="Proc. Natl. Acad. Sci. U.S.A.">
        <title>Structural asymmetry in a conserved signaling system that regulates division, replication, and virulence of an intracellular pathogen.</title>
        <authorList>
            <person name="Willett J.W."/>
            <person name="Herrou J."/>
            <person name="Briegel A."/>
            <person name="Rotskoff G."/>
            <person name="Crosson S."/>
        </authorList>
    </citation>
    <scope>FUNCTION</scope>
    <scope>CATALYTIC ACTIVITY</scope>
    <scope>SUBCELLULAR LOCATION</scope>
    <scope>DISRUPTION PHENOTYPE</scope>
    <source>
        <strain>2308</strain>
    </source>
</reference>
<gene>
    <name evidence="6" type="primary">cckA</name>
    <name evidence="9" type="ordered locus">BAB1_1059</name>
</gene>
<name>CCKA_BRUA2</name>
<proteinExistence type="evidence at protein level"/>
<accession>P0DOA0</accession>
<keyword id="KW-0997">Cell inner membrane</keyword>
<keyword id="KW-1003">Cell membrane</keyword>
<keyword id="KW-0418">Kinase</keyword>
<keyword id="KW-0472">Membrane</keyword>
<keyword id="KW-0597">Phosphoprotein</keyword>
<keyword id="KW-1185">Reference proteome</keyword>
<keyword id="KW-0677">Repeat</keyword>
<keyword id="KW-0808">Transferase</keyword>
<keyword id="KW-0812">Transmembrane</keyword>
<keyword id="KW-1133">Transmembrane helix</keyword>
<comment type="function">
    <text evidence="5">Component of a regulatory phosphorelay system that controls B.abortus cell growth, division, and intracellular survival inside mammalian host cells. This signaling pathway is composed of CckA, ChpT, CtrA and CpdR. CckA autophosphorylates in the presence of ATP on a conserved His residue and transfers a phosphoryl group to a conserved Asp residue on its C-terminal receiver domain. CckA-P transfers phosphoryl groups to the ChpT phosphotransferase.</text>
</comment>
<comment type="catalytic activity">
    <reaction evidence="5">
        <text>ATP + protein L-histidine = ADP + protein N-phospho-L-histidine.</text>
        <dbReference type="EC" id="2.7.13.3"/>
    </reaction>
</comment>
<comment type="subcellular location">
    <subcellularLocation>
        <location evidence="8">Cell inner membrane</location>
        <topology evidence="8">Multi-pass membrane protein</topology>
        <orientation evidence="8">Cytoplasmic side</orientation>
    </subcellularLocation>
</comment>
<comment type="disruption phenotype">
    <text evidence="5">This gene cannot be deleted or disrupted in the absence of a complementary copy expressed in trans, indicating this gene is essential in B.abortus.</text>
</comment>
<evidence type="ECO:0000255" key="1"/>
<evidence type="ECO:0000255" key="2">
    <source>
        <dbReference type="PROSITE-ProRule" id="PRU00107"/>
    </source>
</evidence>
<evidence type="ECO:0000255" key="3">
    <source>
        <dbReference type="PROSITE-ProRule" id="PRU00140"/>
    </source>
</evidence>
<evidence type="ECO:0000255" key="4">
    <source>
        <dbReference type="PROSITE-ProRule" id="PRU00169"/>
    </source>
</evidence>
<evidence type="ECO:0000269" key="5">
    <source>
    </source>
</evidence>
<evidence type="ECO:0000303" key="6">
    <source>
    </source>
</evidence>
<evidence type="ECO:0000305" key="7"/>
<evidence type="ECO:0000305" key="8">
    <source>
    </source>
</evidence>
<evidence type="ECO:0000312" key="9">
    <source>
        <dbReference type="EMBL" id="AM040264"/>
    </source>
</evidence>
<sequence length="945" mass="103190">MRPKWCKTTVLASFPRGSACTARQLKHSANRIYLDARASVPARRAGILNEDRIELPDDAIGASAERRSTRDLRKPSRAGIQHERAVGLMSRQTDNTYPKPLVMPKRGPSAALRLLIVGILLMGAAFIYFLFRDQLGDGFALVLMGVLSMVGVFYLFGAATGLIQFSQRSDHQDLAHSFMDTQPEGTVISDPRGQIVYANQAYARMTGATDADGIRPLDQVLASEPAASDAIYRLTNAVRDGLSAQEEVRISGGLSRGANGSLAPVWYRIKARALEGGAEFKGPLVAWQVADISEERAEQERFFQELQEAINHLDHAPAGFFSANPAGRIIYLNATLAEWLGVDLTQFTPGSLTLNDIVAGSGMALIKAVKAEPGTSRNTVIDLDLIKRNGQSLAVRFYHRVQTARDGMPGTTRTIVLDRAEGDDSSVAQRSAEVRFTRFFNSAPMAIAAVDAEGHTLRTNARFLDIFSGVVDRDAIDRRVKLENVVHERDRETFNKALAAAFAGQASISPVDTVLPGNEERHIRFYMSPVTDLGGEAAEEAAVISAVETTEQKALENQMAQSQKMQAVGQLAGGIAHDFNNVLTAIIMSSDLLLTNHRASDPSFPDIMNIKQNANRAASLVRQLLAFSRRQTLRPEVLDLTDVLADLRMLLARLVGKDIELKIDHGRDLWPVKADLGQFEQVAVNLAVNARDAMPEGGQITLRTRNIPAADAAKLHYRDLPEADYVVFEVEDTGTGIPADVLEKIFEPFFTTKEVGKGTGLGLSMVYGIIKQTGGFIYCDSEVGKGTTFKIFLPRLIEEKRADDAPVAAKEKKVEKATDLSGSATVLLVEDEDAVRMGGVRALQSRGYTVHEAASGVEALEIMEELGGEVDIVVSDVVMPEMDGPTLLRELRKTHPDIKFIFVSGYAEDAFARNLPADAKFGFLPKPFSLKQLATTVKEMLEKQD</sequence>
<dbReference type="EC" id="2.7.13.3" evidence="5"/>
<dbReference type="EMBL" id="AM040264">
    <property type="status" value="NOT_ANNOTATED_CDS"/>
    <property type="molecule type" value="Genomic_DNA"/>
</dbReference>
<dbReference type="SMR" id="P0DOA0"/>
<dbReference type="Proteomes" id="UP000002719">
    <property type="component" value="Chromosome I"/>
</dbReference>
<dbReference type="GO" id="GO:0005886">
    <property type="term" value="C:plasma membrane"/>
    <property type="evidence" value="ECO:0007669"/>
    <property type="project" value="UniProtKB-SubCell"/>
</dbReference>
<dbReference type="GO" id="GO:0000155">
    <property type="term" value="F:phosphorelay sensor kinase activity"/>
    <property type="evidence" value="ECO:0007669"/>
    <property type="project" value="InterPro"/>
</dbReference>
<dbReference type="GO" id="GO:0004673">
    <property type="term" value="F:protein histidine kinase activity"/>
    <property type="evidence" value="ECO:0000314"/>
    <property type="project" value="UniProtKB"/>
</dbReference>
<dbReference type="GO" id="GO:0018106">
    <property type="term" value="P:peptidyl-histidine phosphorylation"/>
    <property type="evidence" value="ECO:0000314"/>
    <property type="project" value="UniProtKB"/>
</dbReference>
<dbReference type="GO" id="GO:0000160">
    <property type="term" value="P:phosphorelay signal transduction system"/>
    <property type="evidence" value="ECO:0000314"/>
    <property type="project" value="UniProtKB"/>
</dbReference>
<dbReference type="CDD" id="cd16919">
    <property type="entry name" value="HATPase_CckA-like"/>
    <property type="match status" value="1"/>
</dbReference>
<dbReference type="CDD" id="cd00082">
    <property type="entry name" value="HisKA"/>
    <property type="match status" value="1"/>
</dbReference>
<dbReference type="CDD" id="cd00130">
    <property type="entry name" value="PAS"/>
    <property type="match status" value="1"/>
</dbReference>
<dbReference type="CDD" id="cd18160">
    <property type="entry name" value="REC_CpdR_CckA-like"/>
    <property type="match status" value="1"/>
</dbReference>
<dbReference type="FunFam" id="1.10.287.130:FF:000037">
    <property type="entry name" value="Hybrid sensor histidine kinase/response regulator"/>
    <property type="match status" value="1"/>
</dbReference>
<dbReference type="FunFam" id="3.40.50.2300:FF:000314">
    <property type="entry name" value="Multi-sensor hybrid histidine kinase"/>
    <property type="match status" value="1"/>
</dbReference>
<dbReference type="FunFam" id="3.30.450.20:FF:000289">
    <property type="entry name" value="Sensory box histidine kinase/response regulator"/>
    <property type="match status" value="1"/>
</dbReference>
<dbReference type="FunFam" id="3.30.565.10:FF:000185">
    <property type="entry name" value="Sensory box histidine kinase/response regulator"/>
    <property type="match status" value="1"/>
</dbReference>
<dbReference type="Gene3D" id="1.10.287.130">
    <property type="match status" value="1"/>
</dbReference>
<dbReference type="Gene3D" id="3.40.50.2300">
    <property type="match status" value="1"/>
</dbReference>
<dbReference type="Gene3D" id="3.30.565.10">
    <property type="entry name" value="Histidine kinase-like ATPase, C-terminal domain"/>
    <property type="match status" value="1"/>
</dbReference>
<dbReference type="Gene3D" id="3.30.450.20">
    <property type="entry name" value="PAS domain"/>
    <property type="match status" value="3"/>
</dbReference>
<dbReference type="InterPro" id="IPR011006">
    <property type="entry name" value="CheY-like_superfamily"/>
</dbReference>
<dbReference type="InterPro" id="IPR036890">
    <property type="entry name" value="HATPase_C_sf"/>
</dbReference>
<dbReference type="InterPro" id="IPR005467">
    <property type="entry name" value="His_kinase_dom"/>
</dbReference>
<dbReference type="InterPro" id="IPR003661">
    <property type="entry name" value="HisK_dim/P_dom"/>
</dbReference>
<dbReference type="InterPro" id="IPR036097">
    <property type="entry name" value="HisK_dim/P_sf"/>
</dbReference>
<dbReference type="InterPro" id="IPR000014">
    <property type="entry name" value="PAS"/>
</dbReference>
<dbReference type="InterPro" id="IPR035965">
    <property type="entry name" value="PAS-like_dom_sf"/>
</dbReference>
<dbReference type="InterPro" id="IPR013656">
    <property type="entry name" value="PAS_4"/>
</dbReference>
<dbReference type="InterPro" id="IPR004358">
    <property type="entry name" value="Sig_transdc_His_kin-like_C"/>
</dbReference>
<dbReference type="InterPro" id="IPR001789">
    <property type="entry name" value="Sig_transdc_resp-reg_receiver"/>
</dbReference>
<dbReference type="NCBIfam" id="NF046020">
    <property type="entry name" value="HisKinCckABruc"/>
    <property type="match status" value="1"/>
</dbReference>
<dbReference type="PANTHER" id="PTHR43065">
    <property type="entry name" value="SENSOR HISTIDINE KINASE"/>
    <property type="match status" value="1"/>
</dbReference>
<dbReference type="PANTHER" id="PTHR43065:SF42">
    <property type="entry name" value="TWO-COMPONENT SENSOR PPRA"/>
    <property type="match status" value="1"/>
</dbReference>
<dbReference type="Pfam" id="PF02518">
    <property type="entry name" value="HATPase_c"/>
    <property type="match status" value="1"/>
</dbReference>
<dbReference type="Pfam" id="PF00512">
    <property type="entry name" value="HisKA"/>
    <property type="match status" value="1"/>
</dbReference>
<dbReference type="Pfam" id="PF08448">
    <property type="entry name" value="PAS_4"/>
    <property type="match status" value="1"/>
</dbReference>
<dbReference type="Pfam" id="PF13188">
    <property type="entry name" value="PAS_8"/>
    <property type="match status" value="2"/>
</dbReference>
<dbReference type="Pfam" id="PF00072">
    <property type="entry name" value="Response_reg"/>
    <property type="match status" value="1"/>
</dbReference>
<dbReference type="PRINTS" id="PR00344">
    <property type="entry name" value="BCTRLSENSOR"/>
</dbReference>
<dbReference type="SMART" id="SM00387">
    <property type="entry name" value="HATPase_c"/>
    <property type="match status" value="1"/>
</dbReference>
<dbReference type="SMART" id="SM00388">
    <property type="entry name" value="HisKA"/>
    <property type="match status" value="1"/>
</dbReference>
<dbReference type="SMART" id="SM00091">
    <property type="entry name" value="PAS"/>
    <property type="match status" value="3"/>
</dbReference>
<dbReference type="SMART" id="SM00448">
    <property type="entry name" value="REC"/>
    <property type="match status" value="1"/>
</dbReference>
<dbReference type="SUPFAM" id="SSF55874">
    <property type="entry name" value="ATPase domain of HSP90 chaperone/DNA topoisomerase II/histidine kinase"/>
    <property type="match status" value="1"/>
</dbReference>
<dbReference type="SUPFAM" id="SSF52172">
    <property type="entry name" value="CheY-like"/>
    <property type="match status" value="1"/>
</dbReference>
<dbReference type="SUPFAM" id="SSF47384">
    <property type="entry name" value="Homodimeric domain of signal transducing histidine kinase"/>
    <property type="match status" value="1"/>
</dbReference>
<dbReference type="SUPFAM" id="SSF55785">
    <property type="entry name" value="PYP-like sensor domain (PAS domain)"/>
    <property type="match status" value="3"/>
</dbReference>
<dbReference type="PROSITE" id="PS50109">
    <property type="entry name" value="HIS_KIN"/>
    <property type="match status" value="1"/>
</dbReference>
<dbReference type="PROSITE" id="PS50112">
    <property type="entry name" value="PAS"/>
    <property type="match status" value="2"/>
</dbReference>
<dbReference type="PROSITE" id="PS50110">
    <property type="entry name" value="RESPONSE_REGULATORY"/>
    <property type="match status" value="1"/>
</dbReference>